<organism>
    <name type="scientific">Clostridium botulinum (strain Langeland / NCTC 10281 / Type F)</name>
    <dbReference type="NCBI Taxonomy" id="441772"/>
    <lineage>
        <taxon>Bacteria</taxon>
        <taxon>Bacillati</taxon>
        <taxon>Bacillota</taxon>
        <taxon>Clostridia</taxon>
        <taxon>Eubacteriales</taxon>
        <taxon>Clostridiaceae</taxon>
        <taxon>Clostridium</taxon>
    </lineage>
</organism>
<accession>A7GJ46</accession>
<dbReference type="EMBL" id="CP000728">
    <property type="protein sequence ID" value="ABS41714.1"/>
    <property type="molecule type" value="Genomic_DNA"/>
</dbReference>
<dbReference type="SMR" id="A7GJ46"/>
<dbReference type="KEGG" id="cbf:CLI_3635"/>
<dbReference type="HOGENOM" id="CLU_092403_0_2_9"/>
<dbReference type="Proteomes" id="UP000002410">
    <property type="component" value="Chromosome"/>
</dbReference>
<dbReference type="GO" id="GO:0015935">
    <property type="term" value="C:small ribosomal subunit"/>
    <property type="evidence" value="ECO:0007669"/>
    <property type="project" value="InterPro"/>
</dbReference>
<dbReference type="GO" id="GO:0019843">
    <property type="term" value="F:rRNA binding"/>
    <property type="evidence" value="ECO:0007669"/>
    <property type="project" value="UniProtKB-UniRule"/>
</dbReference>
<dbReference type="GO" id="GO:0003735">
    <property type="term" value="F:structural constituent of ribosome"/>
    <property type="evidence" value="ECO:0007669"/>
    <property type="project" value="InterPro"/>
</dbReference>
<dbReference type="GO" id="GO:0042274">
    <property type="term" value="P:ribosomal small subunit biogenesis"/>
    <property type="evidence" value="ECO:0007669"/>
    <property type="project" value="TreeGrafter"/>
</dbReference>
<dbReference type="GO" id="GO:0006412">
    <property type="term" value="P:translation"/>
    <property type="evidence" value="ECO:0007669"/>
    <property type="project" value="UniProtKB-UniRule"/>
</dbReference>
<dbReference type="CDD" id="cd00165">
    <property type="entry name" value="S4"/>
    <property type="match status" value="1"/>
</dbReference>
<dbReference type="FunFam" id="1.10.1050.10:FF:000001">
    <property type="entry name" value="30S ribosomal protein S4"/>
    <property type="match status" value="1"/>
</dbReference>
<dbReference type="FunFam" id="3.10.290.10:FF:000001">
    <property type="entry name" value="30S ribosomal protein S4"/>
    <property type="match status" value="1"/>
</dbReference>
<dbReference type="Gene3D" id="1.10.1050.10">
    <property type="entry name" value="Ribosomal Protein S4 Delta 41, Chain A, domain 1"/>
    <property type="match status" value="1"/>
</dbReference>
<dbReference type="Gene3D" id="3.10.290.10">
    <property type="entry name" value="RNA-binding S4 domain"/>
    <property type="match status" value="1"/>
</dbReference>
<dbReference type="HAMAP" id="MF_01306_B">
    <property type="entry name" value="Ribosomal_uS4_B"/>
    <property type="match status" value="1"/>
</dbReference>
<dbReference type="InterPro" id="IPR022801">
    <property type="entry name" value="Ribosomal_uS4"/>
</dbReference>
<dbReference type="InterPro" id="IPR005709">
    <property type="entry name" value="Ribosomal_uS4_bac-type"/>
</dbReference>
<dbReference type="InterPro" id="IPR018079">
    <property type="entry name" value="Ribosomal_uS4_CS"/>
</dbReference>
<dbReference type="InterPro" id="IPR001912">
    <property type="entry name" value="Ribosomal_uS4_N"/>
</dbReference>
<dbReference type="InterPro" id="IPR002942">
    <property type="entry name" value="S4_RNA-bd"/>
</dbReference>
<dbReference type="InterPro" id="IPR036986">
    <property type="entry name" value="S4_RNA-bd_sf"/>
</dbReference>
<dbReference type="NCBIfam" id="NF003717">
    <property type="entry name" value="PRK05327.1"/>
    <property type="match status" value="1"/>
</dbReference>
<dbReference type="NCBIfam" id="TIGR01017">
    <property type="entry name" value="rpsD_bact"/>
    <property type="match status" value="1"/>
</dbReference>
<dbReference type="PANTHER" id="PTHR11831">
    <property type="entry name" value="30S 40S RIBOSOMAL PROTEIN"/>
    <property type="match status" value="1"/>
</dbReference>
<dbReference type="PANTHER" id="PTHR11831:SF4">
    <property type="entry name" value="SMALL RIBOSOMAL SUBUNIT PROTEIN US4M"/>
    <property type="match status" value="1"/>
</dbReference>
<dbReference type="Pfam" id="PF00163">
    <property type="entry name" value="Ribosomal_S4"/>
    <property type="match status" value="1"/>
</dbReference>
<dbReference type="Pfam" id="PF01479">
    <property type="entry name" value="S4"/>
    <property type="match status" value="1"/>
</dbReference>
<dbReference type="SMART" id="SM01390">
    <property type="entry name" value="Ribosomal_S4"/>
    <property type="match status" value="1"/>
</dbReference>
<dbReference type="SMART" id="SM00363">
    <property type="entry name" value="S4"/>
    <property type="match status" value="1"/>
</dbReference>
<dbReference type="SUPFAM" id="SSF55174">
    <property type="entry name" value="Alpha-L RNA-binding motif"/>
    <property type="match status" value="1"/>
</dbReference>
<dbReference type="PROSITE" id="PS00632">
    <property type="entry name" value="RIBOSOMAL_S4"/>
    <property type="match status" value="1"/>
</dbReference>
<dbReference type="PROSITE" id="PS50889">
    <property type="entry name" value="S4"/>
    <property type="match status" value="1"/>
</dbReference>
<evidence type="ECO:0000255" key="1">
    <source>
        <dbReference type="HAMAP-Rule" id="MF_01306"/>
    </source>
</evidence>
<evidence type="ECO:0000305" key="2"/>
<comment type="function">
    <text evidence="1">One of the primary rRNA binding proteins, it binds directly to 16S rRNA where it nucleates assembly of the body of the 30S subunit.</text>
</comment>
<comment type="function">
    <text evidence="1">With S5 and S12 plays an important role in translational accuracy.</text>
</comment>
<comment type="subunit">
    <text evidence="1">Part of the 30S ribosomal subunit. Contacts protein S5. The interaction surface between S4 and S5 is involved in control of translational fidelity.</text>
</comment>
<comment type="similarity">
    <text evidence="1">Belongs to the universal ribosomal protein uS4 family.</text>
</comment>
<proteinExistence type="inferred from homology"/>
<keyword id="KW-0687">Ribonucleoprotein</keyword>
<keyword id="KW-0689">Ribosomal protein</keyword>
<keyword id="KW-0694">RNA-binding</keyword>
<keyword id="KW-0699">rRNA-binding</keyword>
<protein>
    <recommendedName>
        <fullName evidence="1">Small ribosomal subunit protein uS4A</fullName>
    </recommendedName>
    <alternativeName>
        <fullName evidence="2">30S ribosomal protein S4 1</fullName>
    </alternativeName>
</protein>
<gene>
    <name evidence="1" type="primary">rpsD1</name>
    <name type="ordered locus">CLI_3635</name>
</gene>
<sequence>MARYTGATCRLCRREGLKLFLKGDRCYTDKCAFARRGYAPGQHGQSRKKVSNYGLQLREKQKAKRIYGILERQFRGYYEEADRRRGITGENLLRLLEMRLDNVVYRLGYGNSRTEARQLVTHGHFLVNGKKVDIPSYQVSANDVITVCDKSKATEKFKTFAENPKTLPAWLSGNVEGFEGKVERQPAREDIDVPVNETLIVELYSK</sequence>
<reference key="1">
    <citation type="submission" date="2007-06" db="EMBL/GenBank/DDBJ databases">
        <authorList>
            <person name="Brinkac L.M."/>
            <person name="Daugherty S."/>
            <person name="Dodson R.J."/>
            <person name="Madupu R."/>
            <person name="Brown J.L."/>
            <person name="Bruce D."/>
            <person name="Detter C."/>
            <person name="Munk C."/>
            <person name="Smith L.A."/>
            <person name="Smith T.J."/>
            <person name="White O."/>
            <person name="Brettin T.S."/>
        </authorList>
    </citation>
    <scope>NUCLEOTIDE SEQUENCE [LARGE SCALE GENOMIC DNA]</scope>
    <source>
        <strain>Langeland / NCTC 10281 / Type F</strain>
    </source>
</reference>
<name>RS4A_CLOBL</name>
<feature type="chain" id="PRO_0000322291" description="Small ribosomal subunit protein uS4A">
    <location>
        <begin position="1"/>
        <end position="206"/>
    </location>
</feature>
<feature type="domain" description="S4 RNA-binding" evidence="1">
    <location>
        <begin position="98"/>
        <end position="164"/>
    </location>
</feature>